<evidence type="ECO:0000255" key="1"/>
<evidence type="ECO:0000255" key="2">
    <source>
        <dbReference type="PROSITE-ProRule" id="PRU01164"/>
    </source>
</evidence>
<evidence type="ECO:0000256" key="3">
    <source>
        <dbReference type="SAM" id="MobiDB-lite"/>
    </source>
</evidence>
<evidence type="ECO:0000269" key="4">
    <source>
    </source>
</evidence>
<evidence type="ECO:0000305" key="5"/>
<feature type="signal peptide" evidence="4">
    <location>
        <begin position="1"/>
        <end position="19"/>
    </location>
</feature>
<feature type="chain" id="PRO_0000327558" description="Protein psiF">
    <location>
        <begin position="20"/>
        <end position="708"/>
    </location>
</feature>
<feature type="topological domain" description="Extracellular" evidence="1">
    <location>
        <begin position="20"/>
        <end position="643"/>
    </location>
</feature>
<feature type="transmembrane region" description="Helical" evidence="1">
    <location>
        <begin position="644"/>
        <end position="664"/>
    </location>
</feature>
<feature type="topological domain" description="Cytoplasmic" evidence="1">
    <location>
        <begin position="665"/>
        <end position="708"/>
    </location>
</feature>
<feature type="domain" description="PA14" evidence="2">
    <location>
        <begin position="103"/>
        <end position="263"/>
    </location>
</feature>
<feature type="region of interest" description="Disordered" evidence="3">
    <location>
        <begin position="682"/>
        <end position="708"/>
    </location>
</feature>
<feature type="compositionally biased region" description="Polar residues" evidence="3">
    <location>
        <begin position="682"/>
        <end position="702"/>
    </location>
</feature>
<feature type="glycosylation site" description="N-linked (GlcNAc...) asparagine" evidence="1">
    <location>
        <position position="78"/>
    </location>
</feature>
<feature type="glycosylation site" description="N-linked (GlcNAc...) asparagine" evidence="1">
    <location>
        <position position="116"/>
    </location>
</feature>
<feature type="glycosylation site" description="N-linked (GlcNAc...) asparagine" evidence="1">
    <location>
        <position position="222"/>
    </location>
</feature>
<feature type="glycosylation site" description="N-linked (GlcNAc...) asparagine" evidence="1">
    <location>
        <position position="317"/>
    </location>
</feature>
<feature type="glycosylation site" description="N-linked (GlcNAc...) asparagine" evidence="1">
    <location>
        <position position="318"/>
    </location>
</feature>
<feature type="glycosylation site" description="N-linked (GlcNAc...) asparagine" evidence="1">
    <location>
        <position position="371"/>
    </location>
</feature>
<feature type="glycosylation site" description="N-linked (GlcNAc...) asparagine" evidence="1">
    <location>
        <position position="498"/>
    </location>
</feature>
<feature type="glycosylation site" description="N-linked (GlcNAc...) asparagine" evidence="1">
    <location>
        <position position="600"/>
    </location>
</feature>
<accession>Q7YSJ4</accession>
<accession>Q54YZ8</accession>
<gene>
    <name type="primary">psiF</name>
    <name type="synonym">dicA</name>
    <name type="synonym">dicA1</name>
    <name type="ORF">DDB_G0278581</name>
</gene>
<proteinExistence type="evidence at protein level"/>
<comment type="function">
    <text evidence="4">Acts as a quorum sensing protein regulating discoidin gene expression during growth and development. D.discoideum is a single-celled amoebae and switches to multicellular development when food becomes limited. As the growing cells reach a high density, they begin expressing discoidin genes. The ability of psiF/dicA to induce discoidin gene expression when present in conditioned medium, suggests that it allows cells to sense their local density.</text>
</comment>
<comment type="subunit">
    <text evidence="4">Forms a complex with dicB.</text>
</comment>
<comment type="subcellular location">
    <subcellularLocation>
        <location evidence="5">Membrane</location>
        <topology evidence="5">Single-pass type I membrane protein</topology>
    </subcellularLocation>
    <subcellularLocation>
        <location evidence="4">Secreted</location>
    </subcellularLocation>
</comment>
<comment type="developmental stage">
    <text evidence="4">Expressed in vegetative and developing cells.</text>
</comment>
<comment type="miscellaneous">
    <text>According to PubMed:15947191, it is secreted in the conditioned medium. However, prediction tools clearly predict a transmembrane domain. In some conditions, it may be cleaved and secreted in the conditioned medium, which would explain the discrepancy.</text>
</comment>
<comment type="similarity">
    <text evidence="5">Belongs to the prespore-cell-inducing factor family.</text>
</comment>
<keyword id="KW-0217">Developmental protein</keyword>
<keyword id="KW-0221">Differentiation</keyword>
<keyword id="KW-0903">Direct protein sequencing</keyword>
<keyword id="KW-0325">Glycoprotein</keyword>
<keyword id="KW-0472">Membrane</keyword>
<keyword id="KW-1185">Reference proteome</keyword>
<keyword id="KW-0964">Secreted</keyword>
<keyword id="KW-0732">Signal</keyword>
<keyword id="KW-0812">Transmembrane</keyword>
<keyword id="KW-1133">Transmembrane helix</keyword>
<reference key="1">
    <citation type="journal article" date="2005" name="Eukaryot. Cell">
        <title>A cysteine-rich extracellular protein containing a PA14 domain mediates quorum sensing in Dictyostelium discoideum.</title>
        <authorList>
            <person name="Kolbinger A."/>
            <person name="Gao T."/>
            <person name="Brock D."/>
            <person name="Ammann R."/>
            <person name="Kisters A."/>
            <person name="Kellermann J."/>
            <person name="Hatton D."/>
            <person name="Gomer R.H."/>
            <person name="Wetterauer B."/>
        </authorList>
    </citation>
    <scope>NUCLEOTIDE SEQUENCE [GENOMIC DNA / MRNA]</scope>
    <scope>PROTEIN SEQUENCE OF N-TERMINUS</scope>
    <scope>PROTEIN SEQUENCE OF 625-638</scope>
    <scope>FUNCTION</scope>
    <scope>SUBUNIT</scope>
    <scope>SUBCELLULAR LOCATION</scope>
    <scope>DEVELOPMENTAL STAGE</scope>
</reference>
<reference key="2">
    <citation type="journal article" date="2005" name="Nature">
        <title>The genome of the social amoeba Dictyostelium discoideum.</title>
        <authorList>
            <person name="Eichinger L."/>
            <person name="Pachebat J.A."/>
            <person name="Gloeckner G."/>
            <person name="Rajandream M.A."/>
            <person name="Sucgang R."/>
            <person name="Berriman M."/>
            <person name="Song J."/>
            <person name="Olsen R."/>
            <person name="Szafranski K."/>
            <person name="Xu Q."/>
            <person name="Tunggal B."/>
            <person name="Kummerfeld S."/>
            <person name="Madera M."/>
            <person name="Konfortov B.A."/>
            <person name="Rivero F."/>
            <person name="Bankier A.T."/>
            <person name="Lehmann R."/>
            <person name="Hamlin N."/>
            <person name="Davies R."/>
            <person name="Gaudet P."/>
            <person name="Fey P."/>
            <person name="Pilcher K."/>
            <person name="Chen G."/>
            <person name="Saunders D."/>
            <person name="Sodergren E.J."/>
            <person name="Davis P."/>
            <person name="Kerhornou A."/>
            <person name="Nie X."/>
            <person name="Hall N."/>
            <person name="Anjard C."/>
            <person name="Hemphill L."/>
            <person name="Bason N."/>
            <person name="Farbrother P."/>
            <person name="Desany B."/>
            <person name="Just E."/>
            <person name="Morio T."/>
            <person name="Rost R."/>
            <person name="Churcher C.M."/>
            <person name="Cooper J."/>
            <person name="Haydock S."/>
            <person name="van Driessche N."/>
            <person name="Cronin A."/>
            <person name="Goodhead I."/>
            <person name="Muzny D.M."/>
            <person name="Mourier T."/>
            <person name="Pain A."/>
            <person name="Lu M."/>
            <person name="Harper D."/>
            <person name="Lindsay R."/>
            <person name="Hauser H."/>
            <person name="James K.D."/>
            <person name="Quiles M."/>
            <person name="Madan Babu M."/>
            <person name="Saito T."/>
            <person name="Buchrieser C."/>
            <person name="Wardroper A."/>
            <person name="Felder M."/>
            <person name="Thangavelu M."/>
            <person name="Johnson D."/>
            <person name="Knights A."/>
            <person name="Loulseged H."/>
            <person name="Mungall K.L."/>
            <person name="Oliver K."/>
            <person name="Price C."/>
            <person name="Quail M.A."/>
            <person name="Urushihara H."/>
            <person name="Hernandez J."/>
            <person name="Rabbinowitsch E."/>
            <person name="Steffen D."/>
            <person name="Sanders M."/>
            <person name="Ma J."/>
            <person name="Kohara Y."/>
            <person name="Sharp S."/>
            <person name="Simmonds M.N."/>
            <person name="Spiegler S."/>
            <person name="Tivey A."/>
            <person name="Sugano S."/>
            <person name="White B."/>
            <person name="Walker D."/>
            <person name="Woodward J.R."/>
            <person name="Winckler T."/>
            <person name="Tanaka Y."/>
            <person name="Shaulsky G."/>
            <person name="Schleicher M."/>
            <person name="Weinstock G.M."/>
            <person name="Rosenthal A."/>
            <person name="Cox E.C."/>
            <person name="Chisholm R.L."/>
            <person name="Gibbs R.A."/>
            <person name="Loomis W.F."/>
            <person name="Platzer M."/>
            <person name="Kay R.R."/>
            <person name="Williams J.G."/>
            <person name="Dear P.H."/>
            <person name="Noegel A.A."/>
            <person name="Barrell B.G."/>
            <person name="Kuspa A."/>
        </authorList>
    </citation>
    <scope>NUCLEOTIDE SEQUENCE [LARGE SCALE GENOMIC DNA]</scope>
    <source>
        <strain>AX4</strain>
    </source>
</reference>
<sequence length="708" mass="76482">MKYLFIAIILILYCSFTKADQKKFLVNMYDNDPLFSPDFENANGAQTGLVKKKLGSDGKPIPANYDMKDPNGNYYIKNATTFKSWFNEVAGVSILVPFELVLTQTAGSQNYYSYSNTSFFPLNELGWYNPSIKGDYEFKKYQDSNKKEQNFHFCMHASFIMSTNCKEVFKFKGDDDVWVFINDVLVLDIGGVHGVQDGTVDMANLPEKIHDSTNSKLGNCKNGTYPFDFFYCERHTKASNCLFETNMGFTCSYYDYCGICNGKGECCTDVKLNQCYTKKCPLPNSLPNGATNYQDYMTIVPTNTCGGTDKCKIYSCNNSTGCEFKQKSCDDGDKCTKDACDSKTGYCSNIPTNPSVVTSCLKSGCDSTTGNYSTPTNCDDKDPCTIDSCINGQGCVHTKACDDEDPCTTDSCSADGKCTHTAIAKCNSDCPSCPSKKCKITSCSEDSGACNYVDMVFASPSECYKATCDPETEEAIYSPIDSSCDTSDSCFTAQCNLNKTCTRVPAINCDDNNECTTDSCSGGSCSNTAIACDDNDPCTIDTCSPSEGCIFTPIVCEQTSLCNTFTCSVGKCVPTPITCSSSVKCQDSICREGVGCVYFNRTCPPDDDCSSAYCSMETGKCISKAYDPLPFSCQSTAVKVGVGIGAAAAAGIAIGGAVAAGLAIFGGKKAYDTWKTSRGNVMTGSQSNPLYTQNQNNGNNPLYSAPAE</sequence>
<organism>
    <name type="scientific">Dictyostelium discoideum</name>
    <name type="common">Social amoeba</name>
    <dbReference type="NCBI Taxonomy" id="44689"/>
    <lineage>
        <taxon>Eukaryota</taxon>
        <taxon>Amoebozoa</taxon>
        <taxon>Evosea</taxon>
        <taxon>Eumycetozoa</taxon>
        <taxon>Dictyostelia</taxon>
        <taxon>Dictyosteliales</taxon>
        <taxon>Dictyosteliaceae</taxon>
        <taxon>Dictyostelium</taxon>
    </lineage>
</organism>
<dbReference type="EMBL" id="AJ548837">
    <property type="protein sequence ID" value="CAD69024.1"/>
    <property type="molecule type" value="mRNA"/>
</dbReference>
<dbReference type="EMBL" id="AJ548838">
    <property type="protein sequence ID" value="CAD69025.1"/>
    <property type="molecule type" value="Genomic_DNA"/>
</dbReference>
<dbReference type="EMBL" id="AAFI02000023">
    <property type="protein sequence ID" value="EAL68463.1"/>
    <property type="molecule type" value="Genomic_DNA"/>
</dbReference>
<dbReference type="RefSeq" id="XP_642054.1">
    <property type="nucleotide sequence ID" value="XM_636962.1"/>
</dbReference>
<dbReference type="FunCoup" id="Q7YSJ4">
    <property type="interactions" value="11"/>
</dbReference>
<dbReference type="GlyCosmos" id="Q7YSJ4">
    <property type="glycosylation" value="8 sites, No reported glycans"/>
</dbReference>
<dbReference type="GlyGen" id="Q7YSJ4">
    <property type="glycosylation" value="8 sites"/>
</dbReference>
<dbReference type="PaxDb" id="44689-DDB0215398"/>
<dbReference type="EnsemblProtists" id="EAL68463">
    <property type="protein sequence ID" value="EAL68463"/>
    <property type="gene ID" value="DDB_G0278581"/>
</dbReference>
<dbReference type="GeneID" id="8621266"/>
<dbReference type="KEGG" id="ddi:DDB_G0278581"/>
<dbReference type="dictyBase" id="DDB_G0278581">
    <property type="gene designation" value="psiF"/>
</dbReference>
<dbReference type="VEuPathDB" id="AmoebaDB:DDB_G0278581"/>
<dbReference type="eggNOG" id="ENOG502RA06">
    <property type="taxonomic scope" value="Eukaryota"/>
</dbReference>
<dbReference type="HOGENOM" id="CLU_024170_0_0_1"/>
<dbReference type="InParanoid" id="Q7YSJ4"/>
<dbReference type="OMA" id="FTCSYYD"/>
<dbReference type="PhylomeDB" id="Q7YSJ4"/>
<dbReference type="PRO" id="PR:Q7YSJ4"/>
<dbReference type="Proteomes" id="UP000002195">
    <property type="component" value="Chromosome 3"/>
</dbReference>
<dbReference type="GO" id="GO:0005576">
    <property type="term" value="C:extracellular region"/>
    <property type="evidence" value="ECO:0000314"/>
    <property type="project" value="dictyBase"/>
</dbReference>
<dbReference type="GO" id="GO:0016020">
    <property type="term" value="C:membrane"/>
    <property type="evidence" value="ECO:0007669"/>
    <property type="project" value="UniProtKB-SubCell"/>
</dbReference>
<dbReference type="GO" id="GO:0030154">
    <property type="term" value="P:cell differentiation"/>
    <property type="evidence" value="ECO:0007669"/>
    <property type="project" value="UniProtKB-KW"/>
</dbReference>
<dbReference type="InterPro" id="IPR011874">
    <property type="entry name" value="Fibro_Slime"/>
</dbReference>
<dbReference type="InterPro" id="IPR037524">
    <property type="entry name" value="PA14/GLEYA"/>
</dbReference>
<dbReference type="InterPro" id="IPR011658">
    <property type="entry name" value="PA14_dom"/>
</dbReference>
<dbReference type="InterPro" id="IPR051154">
    <property type="entry name" value="Prespore-cell_inducing_factor"/>
</dbReference>
<dbReference type="InterPro" id="IPR001673">
    <property type="entry name" value="S_mold_repeat"/>
</dbReference>
<dbReference type="NCBIfam" id="TIGR02148">
    <property type="entry name" value="Fibro_Slime"/>
    <property type="match status" value="1"/>
</dbReference>
<dbReference type="PANTHER" id="PTHR31137">
    <property type="entry name" value="PROTEIN PSIB-RELATED-RELATED"/>
    <property type="match status" value="1"/>
</dbReference>
<dbReference type="PANTHER" id="PTHR31137:SF11">
    <property type="entry name" value="PROTEIN PSIF"/>
    <property type="match status" value="1"/>
</dbReference>
<dbReference type="Pfam" id="PF00526">
    <property type="entry name" value="Dicty_CTDC"/>
    <property type="match status" value="5"/>
</dbReference>
<dbReference type="Pfam" id="PF07691">
    <property type="entry name" value="PA14"/>
    <property type="match status" value="1"/>
</dbReference>
<dbReference type="SMART" id="SM00758">
    <property type="entry name" value="PA14"/>
    <property type="match status" value="1"/>
</dbReference>
<dbReference type="PROSITE" id="PS51820">
    <property type="entry name" value="PA14"/>
    <property type="match status" value="1"/>
</dbReference>
<protein>
    <recommendedName>
        <fullName>Protein psiF</fullName>
    </recommendedName>
    <alternativeName>
        <fullName>Discoidin-inducing complex subunit A</fullName>
    </alternativeName>
</protein>
<name>PSIF_DICDI</name>